<gene>
    <name type="ordered locus">MJ1125</name>
</gene>
<proteinExistence type="predicted"/>
<sequence>MMVKNTIDVKEILRELDTTRIKDYPLMSGKEILLRTNFKGCCGMPSQISQLNLKEQLESC</sequence>
<accession>Q58525</accession>
<dbReference type="EMBL" id="L77117">
    <property type="protein sequence ID" value="AAB99127.1"/>
    <property type="molecule type" value="Genomic_DNA"/>
</dbReference>
<dbReference type="PIR" id="D64440">
    <property type="entry name" value="D64440"/>
</dbReference>
<dbReference type="PaxDb" id="243232-MJ_1125"/>
<dbReference type="EnsemblBacteria" id="AAB99127">
    <property type="protein sequence ID" value="AAB99127"/>
    <property type="gene ID" value="MJ_1125"/>
</dbReference>
<dbReference type="KEGG" id="mja:MJ_1125"/>
<dbReference type="eggNOG" id="arCOG03445">
    <property type="taxonomic scope" value="Archaea"/>
</dbReference>
<dbReference type="HOGENOM" id="CLU_2930225_0_0_2"/>
<dbReference type="InParanoid" id="Q58525"/>
<dbReference type="Proteomes" id="UP000000805">
    <property type="component" value="Chromosome"/>
</dbReference>
<name>Y1125_METJA</name>
<reference key="1">
    <citation type="journal article" date="1996" name="Science">
        <title>Complete genome sequence of the methanogenic archaeon, Methanococcus jannaschii.</title>
        <authorList>
            <person name="Bult C.J."/>
            <person name="White O."/>
            <person name="Olsen G.J."/>
            <person name="Zhou L."/>
            <person name="Fleischmann R.D."/>
            <person name="Sutton G.G."/>
            <person name="Blake J.A."/>
            <person name="FitzGerald L.M."/>
            <person name="Clayton R.A."/>
            <person name="Gocayne J.D."/>
            <person name="Kerlavage A.R."/>
            <person name="Dougherty B.A."/>
            <person name="Tomb J.-F."/>
            <person name="Adams M.D."/>
            <person name="Reich C.I."/>
            <person name="Overbeek R."/>
            <person name="Kirkness E.F."/>
            <person name="Weinstock K.G."/>
            <person name="Merrick J.M."/>
            <person name="Glodek A."/>
            <person name="Scott J.L."/>
            <person name="Geoghagen N.S.M."/>
            <person name="Weidman J.F."/>
            <person name="Fuhrmann J.L."/>
            <person name="Nguyen D."/>
            <person name="Utterback T.R."/>
            <person name="Kelley J.M."/>
            <person name="Peterson J.D."/>
            <person name="Sadow P.W."/>
            <person name="Hanna M.C."/>
            <person name="Cotton M.D."/>
            <person name="Roberts K.M."/>
            <person name="Hurst M.A."/>
            <person name="Kaine B.P."/>
            <person name="Borodovsky M."/>
            <person name="Klenk H.-P."/>
            <person name="Fraser C.M."/>
            <person name="Smith H.O."/>
            <person name="Woese C.R."/>
            <person name="Venter J.C."/>
        </authorList>
    </citation>
    <scope>NUCLEOTIDE SEQUENCE [LARGE SCALE GENOMIC DNA]</scope>
    <source>
        <strain>ATCC 43067 / DSM 2661 / JAL-1 / JCM 10045 / NBRC 100440</strain>
    </source>
</reference>
<keyword id="KW-1185">Reference proteome</keyword>
<protein>
    <recommendedName>
        <fullName>Uncharacterized protein MJ1125</fullName>
    </recommendedName>
</protein>
<organism>
    <name type="scientific">Methanocaldococcus jannaschii (strain ATCC 43067 / DSM 2661 / JAL-1 / JCM 10045 / NBRC 100440)</name>
    <name type="common">Methanococcus jannaschii</name>
    <dbReference type="NCBI Taxonomy" id="243232"/>
    <lineage>
        <taxon>Archaea</taxon>
        <taxon>Methanobacteriati</taxon>
        <taxon>Methanobacteriota</taxon>
        <taxon>Methanomada group</taxon>
        <taxon>Methanococci</taxon>
        <taxon>Methanococcales</taxon>
        <taxon>Methanocaldococcaceae</taxon>
        <taxon>Methanocaldococcus</taxon>
    </lineage>
</organism>
<feature type="chain" id="PRO_0000107179" description="Uncharacterized protein MJ1125">
    <location>
        <begin position="1"/>
        <end position="60"/>
    </location>
</feature>